<reference key="1">
    <citation type="journal article" date="2003" name="EMBO Rep.">
        <title>Identification of a family of endocytic proteins that define a new alpha-adaptin ear-binding motif.</title>
        <authorList>
            <person name="Ritter B."/>
            <person name="Philie J."/>
            <person name="Girard M."/>
            <person name="Tung E.C."/>
            <person name="Blondeau F."/>
            <person name="McPherson P.S."/>
        </authorList>
    </citation>
    <scope>NUCLEOTIDE SEQUENCE [MRNA]</scope>
    <scope>SUBCELLULAR LOCATION</scope>
    <source>
        <strain>C57BL/6J</strain>
        <tissue>Embryo</tissue>
    </source>
</reference>
<reference key="2">
    <citation type="journal article" date="2005" name="Science">
        <title>The transcriptional landscape of the mammalian genome.</title>
        <authorList>
            <person name="Carninci P."/>
            <person name="Kasukawa T."/>
            <person name="Katayama S."/>
            <person name="Gough J."/>
            <person name="Frith M.C."/>
            <person name="Maeda N."/>
            <person name="Oyama R."/>
            <person name="Ravasi T."/>
            <person name="Lenhard B."/>
            <person name="Wells C."/>
            <person name="Kodzius R."/>
            <person name="Shimokawa K."/>
            <person name="Bajic V.B."/>
            <person name="Brenner S.E."/>
            <person name="Batalov S."/>
            <person name="Forrest A.R."/>
            <person name="Zavolan M."/>
            <person name="Davis M.J."/>
            <person name="Wilming L.G."/>
            <person name="Aidinis V."/>
            <person name="Allen J.E."/>
            <person name="Ambesi-Impiombato A."/>
            <person name="Apweiler R."/>
            <person name="Aturaliya R.N."/>
            <person name="Bailey T.L."/>
            <person name="Bansal M."/>
            <person name="Baxter L."/>
            <person name="Beisel K.W."/>
            <person name="Bersano T."/>
            <person name="Bono H."/>
            <person name="Chalk A.M."/>
            <person name="Chiu K.P."/>
            <person name="Choudhary V."/>
            <person name="Christoffels A."/>
            <person name="Clutterbuck D.R."/>
            <person name="Crowe M.L."/>
            <person name="Dalla E."/>
            <person name="Dalrymple B.P."/>
            <person name="de Bono B."/>
            <person name="Della Gatta G."/>
            <person name="di Bernardo D."/>
            <person name="Down T."/>
            <person name="Engstrom P."/>
            <person name="Fagiolini M."/>
            <person name="Faulkner G."/>
            <person name="Fletcher C.F."/>
            <person name="Fukushima T."/>
            <person name="Furuno M."/>
            <person name="Futaki S."/>
            <person name="Gariboldi M."/>
            <person name="Georgii-Hemming P."/>
            <person name="Gingeras T.R."/>
            <person name="Gojobori T."/>
            <person name="Green R.E."/>
            <person name="Gustincich S."/>
            <person name="Harbers M."/>
            <person name="Hayashi Y."/>
            <person name="Hensch T.K."/>
            <person name="Hirokawa N."/>
            <person name="Hill D."/>
            <person name="Huminiecki L."/>
            <person name="Iacono M."/>
            <person name="Ikeo K."/>
            <person name="Iwama A."/>
            <person name="Ishikawa T."/>
            <person name="Jakt M."/>
            <person name="Kanapin A."/>
            <person name="Katoh M."/>
            <person name="Kawasawa Y."/>
            <person name="Kelso J."/>
            <person name="Kitamura H."/>
            <person name="Kitano H."/>
            <person name="Kollias G."/>
            <person name="Krishnan S.P."/>
            <person name="Kruger A."/>
            <person name="Kummerfeld S.K."/>
            <person name="Kurochkin I.V."/>
            <person name="Lareau L.F."/>
            <person name="Lazarevic D."/>
            <person name="Lipovich L."/>
            <person name="Liu J."/>
            <person name="Liuni S."/>
            <person name="McWilliam S."/>
            <person name="Madan Babu M."/>
            <person name="Madera M."/>
            <person name="Marchionni L."/>
            <person name="Matsuda H."/>
            <person name="Matsuzawa S."/>
            <person name="Miki H."/>
            <person name="Mignone F."/>
            <person name="Miyake S."/>
            <person name="Morris K."/>
            <person name="Mottagui-Tabar S."/>
            <person name="Mulder N."/>
            <person name="Nakano N."/>
            <person name="Nakauchi H."/>
            <person name="Ng P."/>
            <person name="Nilsson R."/>
            <person name="Nishiguchi S."/>
            <person name="Nishikawa S."/>
            <person name="Nori F."/>
            <person name="Ohara O."/>
            <person name="Okazaki Y."/>
            <person name="Orlando V."/>
            <person name="Pang K.C."/>
            <person name="Pavan W.J."/>
            <person name="Pavesi G."/>
            <person name="Pesole G."/>
            <person name="Petrovsky N."/>
            <person name="Piazza S."/>
            <person name="Reed J."/>
            <person name="Reid J.F."/>
            <person name="Ring B.Z."/>
            <person name="Ringwald M."/>
            <person name="Rost B."/>
            <person name="Ruan Y."/>
            <person name="Salzberg S.L."/>
            <person name="Sandelin A."/>
            <person name="Schneider C."/>
            <person name="Schoenbach C."/>
            <person name="Sekiguchi K."/>
            <person name="Semple C.A."/>
            <person name="Seno S."/>
            <person name="Sessa L."/>
            <person name="Sheng Y."/>
            <person name="Shibata Y."/>
            <person name="Shimada H."/>
            <person name="Shimada K."/>
            <person name="Silva D."/>
            <person name="Sinclair B."/>
            <person name="Sperling S."/>
            <person name="Stupka E."/>
            <person name="Sugiura K."/>
            <person name="Sultana R."/>
            <person name="Takenaka Y."/>
            <person name="Taki K."/>
            <person name="Tammoja K."/>
            <person name="Tan S.L."/>
            <person name="Tang S."/>
            <person name="Taylor M.S."/>
            <person name="Tegner J."/>
            <person name="Teichmann S.A."/>
            <person name="Ueda H.R."/>
            <person name="van Nimwegen E."/>
            <person name="Verardo R."/>
            <person name="Wei C.L."/>
            <person name="Yagi K."/>
            <person name="Yamanishi H."/>
            <person name="Zabarovsky E."/>
            <person name="Zhu S."/>
            <person name="Zimmer A."/>
            <person name="Hide W."/>
            <person name="Bult C."/>
            <person name="Grimmond S.M."/>
            <person name="Teasdale R.D."/>
            <person name="Liu E.T."/>
            <person name="Brusic V."/>
            <person name="Quackenbush J."/>
            <person name="Wahlestedt C."/>
            <person name="Mattick J.S."/>
            <person name="Hume D.A."/>
            <person name="Kai C."/>
            <person name="Sasaki D."/>
            <person name="Tomaru Y."/>
            <person name="Fukuda S."/>
            <person name="Kanamori-Katayama M."/>
            <person name="Suzuki M."/>
            <person name="Aoki J."/>
            <person name="Arakawa T."/>
            <person name="Iida J."/>
            <person name="Imamura K."/>
            <person name="Itoh M."/>
            <person name="Kato T."/>
            <person name="Kawaji H."/>
            <person name="Kawagashira N."/>
            <person name="Kawashima T."/>
            <person name="Kojima M."/>
            <person name="Kondo S."/>
            <person name="Konno H."/>
            <person name="Nakano K."/>
            <person name="Ninomiya N."/>
            <person name="Nishio T."/>
            <person name="Okada M."/>
            <person name="Plessy C."/>
            <person name="Shibata K."/>
            <person name="Shiraki T."/>
            <person name="Suzuki S."/>
            <person name="Tagami M."/>
            <person name="Waki K."/>
            <person name="Watahiki A."/>
            <person name="Okamura-Oho Y."/>
            <person name="Suzuki H."/>
            <person name="Kawai J."/>
            <person name="Hayashizaki Y."/>
        </authorList>
    </citation>
    <scope>NUCLEOTIDE SEQUENCE [LARGE SCALE MRNA]</scope>
    <source>
        <strain>C57BL/6J</strain>
        <tissue>Embryo</tissue>
        <tissue>Tongue</tissue>
    </source>
</reference>
<reference key="3">
    <citation type="journal article" date="2004" name="Genome Res.">
        <title>The status, quality, and expansion of the NIH full-length cDNA project: the Mammalian Gene Collection (MGC).</title>
        <authorList>
            <consortium name="The MGC Project Team"/>
        </authorList>
    </citation>
    <scope>NUCLEOTIDE SEQUENCE [LARGE SCALE MRNA]</scope>
    <source>
        <strain>FVB/N-3</strain>
        <tissue>Mammary tumor</tissue>
    </source>
</reference>
<reference key="4">
    <citation type="journal article" date="2004" name="J. Biol. Chem.">
        <title>Definition of the consensus motif recognized by gamma-adaptin ear domains.</title>
        <authorList>
            <person name="Mattera R."/>
            <person name="Ritter B."/>
            <person name="Sidhu S.S."/>
            <person name="McPherson P.S."/>
            <person name="Bonifacino J.S."/>
        </authorList>
    </citation>
    <scope>INTERACTION WITH GGA1; GGA2; GGA3 AND AP1G1</scope>
</reference>
<reference key="5">
    <citation type="journal article" date="2010" name="Cell">
        <title>A tissue-specific atlas of mouse protein phosphorylation and expression.</title>
        <authorList>
            <person name="Huttlin E.L."/>
            <person name="Jedrychowski M.P."/>
            <person name="Elias J.E."/>
            <person name="Goswami T."/>
            <person name="Rad R."/>
            <person name="Beausoleil S.A."/>
            <person name="Villen J."/>
            <person name="Haas W."/>
            <person name="Sowa M.E."/>
            <person name="Gygi S.P."/>
        </authorList>
    </citation>
    <scope>PHOSPHORYLATION [LARGE SCALE ANALYSIS] AT SER-181</scope>
    <scope>IDENTIFICATION BY MASS SPECTROMETRY [LARGE SCALE ANALYSIS]</scope>
    <source>
        <tissue>Brain</tissue>
        <tissue>Brown adipose tissue</tissue>
        <tissue>Heart</tissue>
        <tissue>Kidney</tissue>
        <tissue>Lung</tissue>
        <tissue>Pancreas</tissue>
        <tissue>Spleen</tissue>
        <tissue>Testis</tissue>
    </source>
</reference>
<comment type="function">
    <text evidence="1">Involved in endocytosis.</text>
</comment>
<comment type="subunit">
    <text evidence="4">Interacts with AP1G1 and AP2A1 components of the adapter protein complexes AP-1 and AP-2. Interacts with the GAE domain proteins GGA1, GGA2 and GGA3.</text>
</comment>
<comment type="subcellular location">
    <subcellularLocation>
        <location evidence="3">Cytoplasmic vesicle</location>
        <location evidence="3">Clathrin-coated vesicle membrane</location>
    </subcellularLocation>
    <subcellularLocation>
        <location evidence="3">Cell membrane</location>
    </subcellularLocation>
    <text>Colocalizes with AP-2 at the plasma membrane.</text>
</comment>
<comment type="tissue specificity">
    <text>Expressed in brain, heart, kidney, liver, lung, skeletal muscles and testis (at protein level).</text>
</comment>
<comment type="domain">
    <text evidence="1">The WXXF motifs mediate binding of accessory proteins to the ear-domain of AP-1, GGAs and AP-2 through hydrophobic interactions. Selective binding to the GAE domains of AP-1 or to the alpha-ear domain of AP-2 is tuned by the acidic context surrounding the motif and the properties of the second residue of the motif itself (By similarity).</text>
</comment>
<comment type="similarity">
    <text evidence="5">Belongs to the NECAP family.</text>
</comment>
<name>NECP2_MOUSE</name>
<accession>Q9D1J1</accession>
<accession>Q3U1M1</accession>
<accession>Q9CV41</accession>
<keyword id="KW-0002">3D-structure</keyword>
<keyword id="KW-1003">Cell membrane</keyword>
<keyword id="KW-0968">Cytoplasmic vesicle</keyword>
<keyword id="KW-0254">Endocytosis</keyword>
<keyword id="KW-0472">Membrane</keyword>
<keyword id="KW-0597">Phosphoprotein</keyword>
<keyword id="KW-0653">Protein transport</keyword>
<keyword id="KW-1185">Reference proteome</keyword>
<keyword id="KW-0677">Repeat</keyword>
<keyword id="KW-0813">Transport</keyword>
<sequence>MEESEYESVLCVKPEVHVYRIPPRATNRGYRASEWQLDQPSWSGRLRITAKGKVAYIKLEDRTSGELFAQAPVDQFPGTAVESVTDSSRYFVIRIEDGNGRRAFIGLGFGDRGDAFDFNVALQDHFKWVKQQCEFAKQAQNPDEGPKLDLGFKDGQTIKINIANMRKKEGAAGTPRARPTSAGGLSLLPPPPGGKSSTVIPPSGEQLSVGGSLVQPAVVSGSGGATELWPQSKPAAAATADIWGDFTKSTGSPSSQSQPGTGWVQF</sequence>
<protein>
    <recommendedName>
        <fullName>Adaptin ear-binding coat-associated protein 2</fullName>
    </recommendedName>
    <alternativeName>
        <fullName>NECAP endocytosis-associated protein 2</fullName>
        <shortName>NECAP-2</shortName>
    </alternativeName>
</protein>
<proteinExistence type="evidence at protein level"/>
<dbReference type="EMBL" id="BK000657">
    <property type="protein sequence ID" value="DAA01434.1"/>
    <property type="molecule type" value="mRNA"/>
</dbReference>
<dbReference type="EMBL" id="AK003463">
    <property type="protein sequence ID" value="BAB22803.1"/>
    <property type="molecule type" value="mRNA"/>
</dbReference>
<dbReference type="EMBL" id="AK009714">
    <property type="protein sequence ID" value="BAB26458.1"/>
    <property type="molecule type" value="mRNA"/>
</dbReference>
<dbReference type="EMBL" id="AK155871">
    <property type="protein sequence ID" value="BAE33474.1"/>
    <property type="molecule type" value="mRNA"/>
</dbReference>
<dbReference type="EMBL" id="BC037069">
    <property type="protein sequence ID" value="AAH37069.1"/>
    <property type="molecule type" value="mRNA"/>
</dbReference>
<dbReference type="CCDS" id="CCDS18862.1"/>
<dbReference type="RefSeq" id="NP_079659.1">
    <property type="nucleotide sequence ID" value="NM_025383.4"/>
</dbReference>
<dbReference type="PDB" id="6OWO">
    <property type="method" value="EM"/>
    <property type="resolution" value="3.20 A"/>
    <property type="chains" value="N=1-266"/>
</dbReference>
<dbReference type="PDB" id="6OXL">
    <property type="method" value="EM"/>
    <property type="resolution" value="3.50 A"/>
    <property type="chains" value="N=1-266"/>
</dbReference>
<dbReference type="PDBsum" id="6OWO"/>
<dbReference type="PDBsum" id="6OXL"/>
<dbReference type="EMDB" id="EMD-20215"/>
<dbReference type="EMDB" id="EMD-20220"/>
<dbReference type="SMR" id="Q9D1J1"/>
<dbReference type="BioGRID" id="211250">
    <property type="interactions" value="6"/>
</dbReference>
<dbReference type="FunCoup" id="Q9D1J1">
    <property type="interactions" value="1723"/>
</dbReference>
<dbReference type="IntAct" id="Q9D1J1">
    <property type="interactions" value="6"/>
</dbReference>
<dbReference type="MINT" id="Q9D1J1"/>
<dbReference type="STRING" id="10090.ENSMUSP00000030760"/>
<dbReference type="iPTMnet" id="Q9D1J1"/>
<dbReference type="PhosphoSitePlus" id="Q9D1J1"/>
<dbReference type="SwissPalm" id="Q9D1J1"/>
<dbReference type="jPOST" id="Q9D1J1"/>
<dbReference type="PaxDb" id="10090-ENSMUSP00000030760"/>
<dbReference type="ProteomicsDB" id="252801"/>
<dbReference type="Pumba" id="Q9D1J1"/>
<dbReference type="Antibodypedia" id="29202">
    <property type="antibodies" value="60 antibodies from 22 providers"/>
</dbReference>
<dbReference type="DNASU" id="66147"/>
<dbReference type="Ensembl" id="ENSMUST00000030760.15">
    <property type="protein sequence ID" value="ENSMUSP00000030760.9"/>
    <property type="gene ID" value="ENSMUSG00000028923.15"/>
</dbReference>
<dbReference type="GeneID" id="66147"/>
<dbReference type="KEGG" id="mmu:66147"/>
<dbReference type="UCSC" id="uc008vnu.2">
    <property type="organism name" value="mouse"/>
</dbReference>
<dbReference type="AGR" id="MGI:1913397"/>
<dbReference type="CTD" id="55707"/>
<dbReference type="MGI" id="MGI:1913397">
    <property type="gene designation" value="Necap2"/>
</dbReference>
<dbReference type="VEuPathDB" id="HostDB:ENSMUSG00000028923"/>
<dbReference type="eggNOG" id="KOG2500">
    <property type="taxonomic scope" value="Eukaryota"/>
</dbReference>
<dbReference type="GeneTree" id="ENSGT00390000009359"/>
<dbReference type="HOGENOM" id="CLU_069884_1_0_1"/>
<dbReference type="InParanoid" id="Q9D1J1"/>
<dbReference type="OMA" id="NEGHRAQ"/>
<dbReference type="OrthoDB" id="10265489at2759"/>
<dbReference type="PhylomeDB" id="Q9D1J1"/>
<dbReference type="TreeFam" id="TF314482"/>
<dbReference type="Reactome" id="R-MMU-8856825">
    <property type="pathway name" value="Cargo recognition for clathrin-mediated endocytosis"/>
</dbReference>
<dbReference type="Reactome" id="R-MMU-8856828">
    <property type="pathway name" value="Clathrin-mediated endocytosis"/>
</dbReference>
<dbReference type="BioGRID-ORCS" id="66147">
    <property type="hits" value="4 hits in 79 CRISPR screens"/>
</dbReference>
<dbReference type="ChiTaRS" id="Necap2">
    <property type="organism name" value="mouse"/>
</dbReference>
<dbReference type="PRO" id="PR:Q9D1J1"/>
<dbReference type="Proteomes" id="UP000000589">
    <property type="component" value="Chromosome 4"/>
</dbReference>
<dbReference type="RNAct" id="Q9D1J1">
    <property type="molecule type" value="protein"/>
</dbReference>
<dbReference type="Bgee" id="ENSMUSG00000028923">
    <property type="expression patterns" value="Expressed in stroma of bone marrow and 257 other cell types or tissues"/>
</dbReference>
<dbReference type="ExpressionAtlas" id="Q9D1J1">
    <property type="expression patterns" value="baseline and differential"/>
</dbReference>
<dbReference type="GO" id="GO:0030125">
    <property type="term" value="C:clathrin vesicle coat"/>
    <property type="evidence" value="ECO:0000314"/>
    <property type="project" value="UniProtKB"/>
</dbReference>
<dbReference type="GO" id="GO:0005886">
    <property type="term" value="C:plasma membrane"/>
    <property type="evidence" value="ECO:0007669"/>
    <property type="project" value="UniProtKB-SubCell"/>
</dbReference>
<dbReference type="GO" id="GO:0006897">
    <property type="term" value="P:endocytosis"/>
    <property type="evidence" value="ECO:0007669"/>
    <property type="project" value="UniProtKB-KW"/>
</dbReference>
<dbReference type="GO" id="GO:0015031">
    <property type="term" value="P:protein transport"/>
    <property type="evidence" value="ECO:0007669"/>
    <property type="project" value="UniProtKB-KW"/>
</dbReference>
<dbReference type="CDD" id="cd13228">
    <property type="entry name" value="PHear_NECAP"/>
    <property type="match status" value="1"/>
</dbReference>
<dbReference type="FunFam" id="2.30.29.30:FF:000064">
    <property type="entry name" value="Adaptin ear-binding coat-associated protein 1"/>
    <property type="match status" value="1"/>
</dbReference>
<dbReference type="Gene3D" id="2.30.29.30">
    <property type="entry name" value="Pleckstrin-homology domain (PH domain)/Phosphotyrosine-binding domain (PTB)"/>
    <property type="match status" value="1"/>
</dbReference>
<dbReference type="InterPro" id="IPR012466">
    <property type="entry name" value="NECAP_PHear"/>
</dbReference>
<dbReference type="InterPro" id="IPR011993">
    <property type="entry name" value="PH-like_dom_sf"/>
</dbReference>
<dbReference type="PANTHER" id="PTHR12847:SF16">
    <property type="entry name" value="ADAPTIN EAR-BINDING COAT-ASSOCIATED PROTEIN 2"/>
    <property type="match status" value="1"/>
</dbReference>
<dbReference type="PANTHER" id="PTHR12847">
    <property type="entry name" value="ATP-BINDING CASSETTE ABC TRANSPORTER-RELATED"/>
    <property type="match status" value="1"/>
</dbReference>
<dbReference type="Pfam" id="PF07933">
    <property type="entry name" value="DUF1681"/>
    <property type="match status" value="1"/>
</dbReference>
<dbReference type="SUPFAM" id="SSF50729">
    <property type="entry name" value="PH domain-like"/>
    <property type="match status" value="1"/>
</dbReference>
<evidence type="ECO:0000250" key="1"/>
<evidence type="ECO:0000256" key="2">
    <source>
        <dbReference type="SAM" id="MobiDB-lite"/>
    </source>
</evidence>
<evidence type="ECO:0000269" key="3">
    <source>
    </source>
</evidence>
<evidence type="ECO:0000269" key="4">
    <source>
    </source>
</evidence>
<evidence type="ECO:0000305" key="5"/>
<evidence type="ECO:0007744" key="6">
    <source>
    </source>
</evidence>
<evidence type="ECO:0007829" key="7">
    <source>
        <dbReference type="PDB" id="6OWO"/>
    </source>
</evidence>
<evidence type="ECO:0007829" key="8">
    <source>
        <dbReference type="PDB" id="6OXL"/>
    </source>
</evidence>
<gene>
    <name type="primary">Necap2</name>
</gene>
<organism>
    <name type="scientific">Mus musculus</name>
    <name type="common">Mouse</name>
    <dbReference type="NCBI Taxonomy" id="10090"/>
    <lineage>
        <taxon>Eukaryota</taxon>
        <taxon>Metazoa</taxon>
        <taxon>Chordata</taxon>
        <taxon>Craniata</taxon>
        <taxon>Vertebrata</taxon>
        <taxon>Euteleostomi</taxon>
        <taxon>Mammalia</taxon>
        <taxon>Eutheria</taxon>
        <taxon>Euarchontoglires</taxon>
        <taxon>Glires</taxon>
        <taxon>Rodentia</taxon>
        <taxon>Myomorpha</taxon>
        <taxon>Muroidea</taxon>
        <taxon>Muridae</taxon>
        <taxon>Murinae</taxon>
        <taxon>Mus</taxon>
        <taxon>Mus</taxon>
    </lineage>
</organism>
<feature type="chain" id="PRO_0000213072" description="Adaptin ear-binding coat-associated protein 2">
    <location>
        <begin position="1"/>
        <end position="266"/>
    </location>
</feature>
<feature type="region of interest" description="Disordered" evidence="2">
    <location>
        <begin position="165"/>
        <end position="198"/>
    </location>
</feature>
<feature type="region of interest" description="Disordered" evidence="2">
    <location>
        <begin position="245"/>
        <end position="266"/>
    </location>
</feature>
<feature type="short sequence motif" description="WXXF motif 1">
    <location>
        <begin position="243"/>
        <end position="246"/>
    </location>
</feature>
<feature type="short sequence motif" description="WXXF motif 2">
    <location>
        <begin position="263"/>
        <end position="266"/>
    </location>
</feature>
<feature type="compositionally biased region" description="Low complexity" evidence="2">
    <location>
        <begin position="249"/>
        <end position="266"/>
    </location>
</feature>
<feature type="modified residue" description="Phosphoserine" evidence="6">
    <location>
        <position position="181"/>
    </location>
</feature>
<feature type="strand" evidence="7">
    <location>
        <begin position="8"/>
        <end position="19"/>
    </location>
</feature>
<feature type="helix" evidence="8">
    <location>
        <begin position="32"/>
        <end position="34"/>
    </location>
</feature>
<feature type="strand" evidence="7">
    <location>
        <begin position="37"/>
        <end position="39"/>
    </location>
</feature>
<feature type="strand" evidence="7">
    <location>
        <begin position="41"/>
        <end position="51"/>
    </location>
</feature>
<feature type="strand" evidence="7">
    <location>
        <begin position="54"/>
        <end position="60"/>
    </location>
</feature>
<feature type="strand" evidence="7">
    <location>
        <begin position="62"/>
        <end position="64"/>
    </location>
</feature>
<feature type="strand" evidence="7">
    <location>
        <begin position="67"/>
        <end position="72"/>
    </location>
</feature>
<feature type="strand" evidence="7">
    <location>
        <begin position="74"/>
        <end position="83"/>
    </location>
</feature>
<feature type="strand" evidence="7">
    <location>
        <begin position="91"/>
        <end position="95"/>
    </location>
</feature>
<feature type="strand" evidence="7">
    <location>
        <begin position="103"/>
        <end position="107"/>
    </location>
</feature>
<feature type="helix" evidence="7">
    <location>
        <begin position="112"/>
        <end position="136"/>
    </location>
</feature>